<accession>Q11NV4</accession>
<dbReference type="EC" id="6.1.1.5" evidence="1"/>
<dbReference type="EMBL" id="CP000383">
    <property type="protein sequence ID" value="ABG60909.1"/>
    <property type="molecule type" value="Genomic_DNA"/>
</dbReference>
<dbReference type="RefSeq" id="WP_011587014.1">
    <property type="nucleotide sequence ID" value="NC_008255.1"/>
</dbReference>
<dbReference type="SMR" id="Q11NV4"/>
<dbReference type="STRING" id="269798.CHU_3676"/>
<dbReference type="KEGG" id="chu:CHU_3676"/>
<dbReference type="eggNOG" id="COG0060">
    <property type="taxonomic scope" value="Bacteria"/>
</dbReference>
<dbReference type="HOGENOM" id="CLU_001493_1_1_10"/>
<dbReference type="OrthoDB" id="9810365at2"/>
<dbReference type="Proteomes" id="UP000001822">
    <property type="component" value="Chromosome"/>
</dbReference>
<dbReference type="GO" id="GO:0005737">
    <property type="term" value="C:cytoplasm"/>
    <property type="evidence" value="ECO:0007669"/>
    <property type="project" value="UniProtKB-SubCell"/>
</dbReference>
<dbReference type="GO" id="GO:0002161">
    <property type="term" value="F:aminoacyl-tRNA deacylase activity"/>
    <property type="evidence" value="ECO:0007669"/>
    <property type="project" value="InterPro"/>
</dbReference>
<dbReference type="GO" id="GO:0005524">
    <property type="term" value="F:ATP binding"/>
    <property type="evidence" value="ECO:0007669"/>
    <property type="project" value="UniProtKB-UniRule"/>
</dbReference>
<dbReference type="GO" id="GO:0004822">
    <property type="term" value="F:isoleucine-tRNA ligase activity"/>
    <property type="evidence" value="ECO:0007669"/>
    <property type="project" value="UniProtKB-UniRule"/>
</dbReference>
<dbReference type="GO" id="GO:0000049">
    <property type="term" value="F:tRNA binding"/>
    <property type="evidence" value="ECO:0007669"/>
    <property type="project" value="InterPro"/>
</dbReference>
<dbReference type="GO" id="GO:0008270">
    <property type="term" value="F:zinc ion binding"/>
    <property type="evidence" value="ECO:0007669"/>
    <property type="project" value="UniProtKB-UniRule"/>
</dbReference>
<dbReference type="GO" id="GO:0006428">
    <property type="term" value="P:isoleucyl-tRNA aminoacylation"/>
    <property type="evidence" value="ECO:0007669"/>
    <property type="project" value="UniProtKB-UniRule"/>
</dbReference>
<dbReference type="CDD" id="cd07961">
    <property type="entry name" value="Anticodon_Ia_Ile_ABEc"/>
    <property type="match status" value="1"/>
</dbReference>
<dbReference type="CDD" id="cd00818">
    <property type="entry name" value="IleRS_core"/>
    <property type="match status" value="1"/>
</dbReference>
<dbReference type="FunFam" id="3.40.50.620:FF:000063">
    <property type="entry name" value="Isoleucine--tRNA ligase"/>
    <property type="match status" value="1"/>
</dbReference>
<dbReference type="FunFam" id="3.40.50.620:FF:000075">
    <property type="entry name" value="Isoleucine--tRNA ligase"/>
    <property type="match status" value="1"/>
</dbReference>
<dbReference type="Gene3D" id="3.40.50.620">
    <property type="entry name" value="HUPs"/>
    <property type="match status" value="2"/>
</dbReference>
<dbReference type="Gene3D" id="1.10.730.10">
    <property type="entry name" value="Isoleucyl-tRNA Synthetase, Domain 1"/>
    <property type="match status" value="1"/>
</dbReference>
<dbReference type="HAMAP" id="MF_02003">
    <property type="entry name" value="Ile_tRNA_synth_type2"/>
    <property type="match status" value="1"/>
</dbReference>
<dbReference type="InterPro" id="IPR002300">
    <property type="entry name" value="aa-tRNA-synth_Ia"/>
</dbReference>
<dbReference type="InterPro" id="IPR033709">
    <property type="entry name" value="Anticodon_Ile_ABEc"/>
</dbReference>
<dbReference type="InterPro" id="IPR002301">
    <property type="entry name" value="Ile-tRNA-ligase"/>
</dbReference>
<dbReference type="InterPro" id="IPR023586">
    <property type="entry name" value="Ile-tRNA-ligase_type2"/>
</dbReference>
<dbReference type="InterPro" id="IPR013155">
    <property type="entry name" value="M/V/L/I-tRNA-synth_anticd-bd"/>
</dbReference>
<dbReference type="InterPro" id="IPR014729">
    <property type="entry name" value="Rossmann-like_a/b/a_fold"/>
</dbReference>
<dbReference type="InterPro" id="IPR009080">
    <property type="entry name" value="tRNAsynth_Ia_anticodon-bd"/>
</dbReference>
<dbReference type="InterPro" id="IPR009008">
    <property type="entry name" value="Val/Leu/Ile-tRNA-synth_edit"/>
</dbReference>
<dbReference type="NCBIfam" id="TIGR00392">
    <property type="entry name" value="ileS"/>
    <property type="match status" value="1"/>
</dbReference>
<dbReference type="PANTHER" id="PTHR42780:SF1">
    <property type="entry name" value="ISOLEUCINE--TRNA LIGASE, CYTOPLASMIC"/>
    <property type="match status" value="1"/>
</dbReference>
<dbReference type="PANTHER" id="PTHR42780">
    <property type="entry name" value="SOLEUCYL-TRNA SYNTHETASE"/>
    <property type="match status" value="1"/>
</dbReference>
<dbReference type="Pfam" id="PF08264">
    <property type="entry name" value="Anticodon_1"/>
    <property type="match status" value="1"/>
</dbReference>
<dbReference type="Pfam" id="PF19302">
    <property type="entry name" value="DUF5915"/>
    <property type="match status" value="1"/>
</dbReference>
<dbReference type="Pfam" id="PF00133">
    <property type="entry name" value="tRNA-synt_1"/>
    <property type="match status" value="1"/>
</dbReference>
<dbReference type="PRINTS" id="PR00984">
    <property type="entry name" value="TRNASYNTHILE"/>
</dbReference>
<dbReference type="SUPFAM" id="SSF47323">
    <property type="entry name" value="Anticodon-binding domain of a subclass of class I aminoacyl-tRNA synthetases"/>
    <property type="match status" value="2"/>
</dbReference>
<dbReference type="SUPFAM" id="SSF52374">
    <property type="entry name" value="Nucleotidylyl transferase"/>
    <property type="match status" value="1"/>
</dbReference>
<dbReference type="SUPFAM" id="SSF50677">
    <property type="entry name" value="ValRS/IleRS/LeuRS editing domain"/>
    <property type="match status" value="1"/>
</dbReference>
<evidence type="ECO:0000255" key="1">
    <source>
        <dbReference type="HAMAP-Rule" id="MF_02003"/>
    </source>
</evidence>
<organism>
    <name type="scientific">Cytophaga hutchinsonii (strain ATCC 33406 / DSM 1761 / CIP 103989 / NBRC 15051 / NCIMB 9469 / D465)</name>
    <dbReference type="NCBI Taxonomy" id="269798"/>
    <lineage>
        <taxon>Bacteria</taxon>
        <taxon>Pseudomonadati</taxon>
        <taxon>Bacteroidota</taxon>
        <taxon>Cytophagia</taxon>
        <taxon>Cytophagales</taxon>
        <taxon>Cytophagaceae</taxon>
        <taxon>Cytophaga</taxon>
    </lineage>
</organism>
<gene>
    <name evidence="1" type="primary">ileS</name>
    <name type="ordered locus">CHU_3676</name>
</gene>
<comment type="function">
    <text evidence="1">Catalyzes the attachment of isoleucine to tRNA(Ile). As IleRS can inadvertently accommodate and process structurally similar amino acids such as valine, to avoid such errors it has two additional distinct tRNA(Ile)-dependent editing activities. One activity is designated as 'pretransfer' editing and involves the hydrolysis of activated Val-AMP. The other activity is designated 'posttransfer' editing and involves deacylation of mischarged Val-tRNA(Ile).</text>
</comment>
<comment type="catalytic activity">
    <reaction evidence="1">
        <text>tRNA(Ile) + L-isoleucine + ATP = L-isoleucyl-tRNA(Ile) + AMP + diphosphate</text>
        <dbReference type="Rhea" id="RHEA:11060"/>
        <dbReference type="Rhea" id="RHEA-COMP:9666"/>
        <dbReference type="Rhea" id="RHEA-COMP:9695"/>
        <dbReference type="ChEBI" id="CHEBI:30616"/>
        <dbReference type="ChEBI" id="CHEBI:33019"/>
        <dbReference type="ChEBI" id="CHEBI:58045"/>
        <dbReference type="ChEBI" id="CHEBI:78442"/>
        <dbReference type="ChEBI" id="CHEBI:78528"/>
        <dbReference type="ChEBI" id="CHEBI:456215"/>
        <dbReference type="EC" id="6.1.1.5"/>
    </reaction>
</comment>
<comment type="cofactor">
    <cofactor evidence="1">
        <name>Zn(2+)</name>
        <dbReference type="ChEBI" id="CHEBI:29105"/>
    </cofactor>
</comment>
<comment type="subunit">
    <text evidence="1">Monomer.</text>
</comment>
<comment type="subcellular location">
    <subcellularLocation>
        <location evidence="1">Cytoplasm</location>
    </subcellularLocation>
</comment>
<comment type="domain">
    <text evidence="1">IleRS has two distinct active sites: one for aminoacylation and one for editing. The misactivated valine is translocated from the active site to the editing site, which sterically excludes the correctly activated isoleucine. The single editing site contains two valyl binding pockets, one specific for each substrate (Val-AMP or Val-tRNA(Ile)).</text>
</comment>
<comment type="similarity">
    <text evidence="1">Belongs to the class-I aminoacyl-tRNA synthetase family. IleS type 2 subfamily.</text>
</comment>
<name>SYI_CYTH3</name>
<proteinExistence type="inferred from homology"/>
<feature type="chain" id="PRO_1000070895" description="Isoleucine--tRNA ligase">
    <location>
        <begin position="1"/>
        <end position="1110"/>
    </location>
</feature>
<feature type="short sequence motif" description="'HIGH' region">
    <location>
        <begin position="47"/>
        <end position="57"/>
    </location>
</feature>
<feature type="short sequence motif" description="'KMSKS' region">
    <location>
        <begin position="658"/>
        <end position="662"/>
    </location>
</feature>
<feature type="binding site" evidence="1">
    <location>
        <position position="661"/>
    </location>
    <ligand>
        <name>ATP</name>
        <dbReference type="ChEBI" id="CHEBI:30616"/>
    </ligand>
</feature>
<reference key="1">
    <citation type="journal article" date="2007" name="Appl. Environ. Microbiol.">
        <title>Genome sequence of the cellulolytic gliding bacterium Cytophaga hutchinsonii.</title>
        <authorList>
            <person name="Xie G."/>
            <person name="Bruce D.C."/>
            <person name="Challacombe J.F."/>
            <person name="Chertkov O."/>
            <person name="Detter J.C."/>
            <person name="Gilna P."/>
            <person name="Han C.S."/>
            <person name="Lucas S."/>
            <person name="Misra M."/>
            <person name="Myers G.L."/>
            <person name="Richardson P."/>
            <person name="Tapia R."/>
            <person name="Thayer N."/>
            <person name="Thompson L.S."/>
            <person name="Brettin T.S."/>
            <person name="Henrissat B."/>
            <person name="Wilson D.B."/>
            <person name="McBride M.J."/>
        </authorList>
    </citation>
    <scope>NUCLEOTIDE SEQUENCE [LARGE SCALE GENOMIC DNA]</scope>
    <source>
        <strain>ATCC 33406 / DSM 1761 / JCM 20678 / CIP 103989 / IAM 12607 / NBRC 15051 / NCIMB 9469 / D465</strain>
    </source>
</reference>
<keyword id="KW-0030">Aminoacyl-tRNA synthetase</keyword>
<keyword id="KW-0067">ATP-binding</keyword>
<keyword id="KW-0963">Cytoplasm</keyword>
<keyword id="KW-0436">Ligase</keyword>
<keyword id="KW-0479">Metal-binding</keyword>
<keyword id="KW-0547">Nucleotide-binding</keyword>
<keyword id="KW-0648">Protein biosynthesis</keyword>
<keyword id="KW-1185">Reference proteome</keyword>
<keyword id="KW-0862">Zinc</keyword>
<protein>
    <recommendedName>
        <fullName evidence="1">Isoleucine--tRNA ligase</fullName>
        <ecNumber evidence="1">6.1.1.5</ecNumber>
    </recommendedName>
    <alternativeName>
        <fullName evidence="1">Isoleucyl-tRNA synthetase</fullName>
        <shortName evidence="1">IleRS</shortName>
    </alternativeName>
</protein>
<sequence length="1110" mass="126860">MKYNEKKTELSEVGKEVQQFWNDKKIFEKSVETREGNPTFTFYEGPPSANGTPGIHHVMGRTVKDIFCRFKTMQGFQVKRKGGWDTHGLPVELQVEKELGITKEDIGKKITVEQYNQKCREAVMKYKSQWDELTVKMGYWVDLEKPYITFENNYIESVWYLLKEFHQKKLLYKGYTIQPYSPAAGTGLSSHELNQPGTYKDVRDTSAVAQFKLKANPKFADNTYFLAWTTTPWTLPSNSALAVGENIEYVLVSTFNPYTFKPVQVILAKALLGKYFSEKAKDLSLEAYKDGDKLIPFKILQSYKGKDLVGIEYEQLMPYLQPETPAFRVIAGDFVSTEDGTGIVHIAPTFGADDARVAKLAGIPSIVTKDDRGNEYPLVDKRGRFTKEVTDFAGEYVKEAYLTDEEKEAERVKQGRDKYLSVDERISIKLKEANRAFKVEKYEHSYPHCWRTDKPVLYYPLDSWFIKTTAKKERLVELNKTINWKPESTGVGRFGNWLENLVDWNLSRSRYWGTPLPIWRSEDGSEEKCIGSIEELKTEIAKAQKAGIETATDIKDLHRPYVDNIVLVSDSGKPMKRELDLIDVWFDSGAMPYAQWHYPFENKELFNNNYPADFIAEGVDQTRGWFFTLHAISGMLYDKVAFKNVIANGLVLDKNGNKMSKRVGNVVNPFETIDKYGPDATRWYMITNAPPWDNLKFNLDGITEVQRRFFGTLQNTYSFFALYANLDNFTFAEAEIPLAQRTESDRWILSKLQSLVKDVADAYSDYEPTKAGRAIQDFVVDDLSNWYVRLNRKRFWKGEYNADKTAAYQTLYTCLETVAKLGAPIAPFYMDKLFSDLNQVSKKNAVESVHLADFPKVNEAFLDVELEERMSLAQRISSLVHSIRKAQTIKVRQPLSRILIPILQPHLKAQIQAVEDLIKNEVNIKAVEYIEDTSGVVIKTIKPNFKKLGKEYGAKLKEIGNAIAELRAEDITAIERNVFELKLADGTVIPITSEDVEIRSQDIPGWSVASEGGITVALDITLSDDLRKEGIARDVVNRVQNLRKDMGLEVQDKIRITIQKVDELINSALSANQEYICTETQAFSLELVEKLADGKEVEMDEQTLIMKIEK</sequence>